<evidence type="ECO:0000250" key="1"/>
<evidence type="ECO:0000305" key="2"/>
<dbReference type="EC" id="1.14.-.-"/>
<dbReference type="EMBL" id="AE000516">
    <property type="protein sequence ID" value="AAK46097.1"/>
    <property type="molecule type" value="Genomic_DNA"/>
</dbReference>
<dbReference type="PIR" id="B70511">
    <property type="entry name" value="B70511"/>
</dbReference>
<dbReference type="SMR" id="P9WPL0"/>
<dbReference type="BindingDB" id="P9WPL0"/>
<dbReference type="KEGG" id="mtc:MT1827"/>
<dbReference type="PATRIC" id="fig|83331.31.peg.1967"/>
<dbReference type="HOGENOM" id="CLU_033716_0_2_11"/>
<dbReference type="Proteomes" id="UP000001020">
    <property type="component" value="Chromosome"/>
</dbReference>
<dbReference type="GO" id="GO:0036199">
    <property type="term" value="F:cholest-4-en-3-one 26-monooxygenase activity"/>
    <property type="evidence" value="ECO:0007669"/>
    <property type="project" value="TreeGrafter"/>
</dbReference>
<dbReference type="GO" id="GO:0020037">
    <property type="term" value="F:heme binding"/>
    <property type="evidence" value="ECO:0007669"/>
    <property type="project" value="InterPro"/>
</dbReference>
<dbReference type="GO" id="GO:0005506">
    <property type="term" value="F:iron ion binding"/>
    <property type="evidence" value="ECO:0007669"/>
    <property type="project" value="InterPro"/>
</dbReference>
<dbReference type="GO" id="GO:0008395">
    <property type="term" value="F:steroid hydroxylase activity"/>
    <property type="evidence" value="ECO:0007669"/>
    <property type="project" value="TreeGrafter"/>
</dbReference>
<dbReference type="GO" id="GO:0006707">
    <property type="term" value="P:cholesterol catabolic process"/>
    <property type="evidence" value="ECO:0007669"/>
    <property type="project" value="TreeGrafter"/>
</dbReference>
<dbReference type="FunFam" id="1.10.630.10:FF:000196">
    <property type="entry name" value="Cytochrome P450 144"/>
    <property type="match status" value="1"/>
</dbReference>
<dbReference type="Gene3D" id="1.10.630.10">
    <property type="entry name" value="Cytochrome P450"/>
    <property type="match status" value="1"/>
</dbReference>
<dbReference type="InterPro" id="IPR001128">
    <property type="entry name" value="Cyt_P450"/>
</dbReference>
<dbReference type="InterPro" id="IPR002397">
    <property type="entry name" value="Cyt_P450_B"/>
</dbReference>
<dbReference type="InterPro" id="IPR017972">
    <property type="entry name" value="Cyt_P450_CS"/>
</dbReference>
<dbReference type="InterPro" id="IPR036396">
    <property type="entry name" value="Cyt_P450_sf"/>
</dbReference>
<dbReference type="PANTHER" id="PTHR46696:SF4">
    <property type="entry name" value="BIOTIN BIOSYNTHESIS CYTOCHROME P450"/>
    <property type="match status" value="1"/>
</dbReference>
<dbReference type="PANTHER" id="PTHR46696">
    <property type="entry name" value="P450, PUTATIVE (EUROFUNG)-RELATED"/>
    <property type="match status" value="1"/>
</dbReference>
<dbReference type="Pfam" id="PF00067">
    <property type="entry name" value="p450"/>
    <property type="match status" value="1"/>
</dbReference>
<dbReference type="PRINTS" id="PR00359">
    <property type="entry name" value="BP450"/>
</dbReference>
<dbReference type="PRINTS" id="PR00385">
    <property type="entry name" value="P450"/>
</dbReference>
<dbReference type="SUPFAM" id="SSF48264">
    <property type="entry name" value="Cytochrome P450"/>
    <property type="match status" value="1"/>
</dbReference>
<dbReference type="PROSITE" id="PS00086">
    <property type="entry name" value="CYTOCHROME_P450"/>
    <property type="match status" value="1"/>
</dbReference>
<keyword id="KW-0349">Heme</keyword>
<keyword id="KW-0408">Iron</keyword>
<keyword id="KW-0479">Metal-binding</keyword>
<keyword id="KW-0503">Monooxygenase</keyword>
<keyword id="KW-0560">Oxidoreductase</keyword>
<keyword id="KW-1185">Reference proteome</keyword>
<feature type="chain" id="PRO_0000426933" description="Cytochrome P450 144">
    <location>
        <begin position="1"/>
        <end position="434"/>
    </location>
</feature>
<feature type="binding site" evidence="1">
    <location>
        <position position="124"/>
    </location>
    <ligand>
        <name>substrate</name>
    </ligand>
</feature>
<feature type="binding site" evidence="1">
    <location>
        <position position="128"/>
    </location>
    <ligand>
        <name>substrate</name>
    </ligand>
</feature>
<feature type="binding site" evidence="1">
    <location>
        <position position="132"/>
    </location>
    <ligand>
        <name>heme</name>
        <dbReference type="ChEBI" id="CHEBI:30413"/>
    </ligand>
</feature>
<feature type="binding site" evidence="1">
    <location>
        <position position="326"/>
    </location>
    <ligand>
        <name>heme</name>
        <dbReference type="ChEBI" id="CHEBI:30413"/>
    </ligand>
</feature>
<feature type="binding site" evidence="1">
    <location>
        <position position="383"/>
    </location>
    <ligand>
        <name>heme</name>
        <dbReference type="ChEBI" id="CHEBI:30413"/>
    </ligand>
</feature>
<feature type="binding site" description="axial binding residue" evidence="1">
    <location>
        <position position="385"/>
    </location>
    <ligand>
        <name>heme</name>
        <dbReference type="ChEBI" id="CHEBI:30413"/>
    </ligand>
    <ligandPart>
        <name>Fe</name>
        <dbReference type="ChEBI" id="CHEBI:18248"/>
    </ligandPart>
</feature>
<comment type="cofactor">
    <cofactor evidence="1">
        <name>heme</name>
        <dbReference type="ChEBI" id="CHEBI:30413"/>
    </cofactor>
</comment>
<comment type="subunit">
    <text evidence="1">Monomer.</text>
</comment>
<comment type="similarity">
    <text evidence="2">Belongs to the cytochrome P450 family.</text>
</comment>
<gene>
    <name type="primary">cyp144</name>
    <name type="ordered locus">MT1827</name>
</gene>
<reference key="1">
    <citation type="journal article" date="2002" name="J. Bacteriol.">
        <title>Whole-genome comparison of Mycobacterium tuberculosis clinical and laboratory strains.</title>
        <authorList>
            <person name="Fleischmann R.D."/>
            <person name="Alland D."/>
            <person name="Eisen J.A."/>
            <person name="Carpenter L."/>
            <person name="White O."/>
            <person name="Peterson J.D."/>
            <person name="DeBoy R.T."/>
            <person name="Dodson R.J."/>
            <person name="Gwinn M.L."/>
            <person name="Haft D.H."/>
            <person name="Hickey E.K."/>
            <person name="Kolonay J.F."/>
            <person name="Nelson W.C."/>
            <person name="Umayam L.A."/>
            <person name="Ermolaeva M.D."/>
            <person name="Salzberg S.L."/>
            <person name="Delcher A."/>
            <person name="Utterback T.R."/>
            <person name="Weidman J.F."/>
            <person name="Khouri H.M."/>
            <person name="Gill J."/>
            <person name="Mikula A."/>
            <person name="Bishai W."/>
            <person name="Jacobs W.R. Jr."/>
            <person name="Venter J.C."/>
            <person name="Fraser C.M."/>
        </authorList>
    </citation>
    <scope>NUCLEOTIDE SEQUENCE [LARGE SCALE GENOMIC DNA]</scope>
    <source>
        <strain>CDC 1551 / Oshkosh</strain>
    </source>
</reference>
<sequence length="434" mass="47219">MRRSPKGSPGAVLDLQRRVDQAVSADHAELMTIAKDANTFFGAESVQDPYPLYERMRAAGSVHRIANSDFYAVCGWDAVNEAIGRPEDFSSNLTATMTYTAEGTAKPFEMDPLGGPTHVLATADDPAHAVHRKLVLRHLAAKRIRVMEQFTVQAADRLWVDGMQDGCIEWMGAMANRLPMMVVAELIGLPDPDIAQLVKWGYAATQLLEGLVENDQLVAAGVALMELSGYIFEQFDRAAADPRDNLLGELATACASGELDTLTAQVMMVTLFAAGGESTAALLGSAVWILATRPDIQQQVRANPELLGAFIEETLRYEPPFRGHYRHVRNATTLDGTELPADSHLLLLWGAANRDPAQFEAPGEFRLDRAGGKGHISFGKGAHFCVGAALARLEARIVLRLLLDRTSVIEAADVGGWLPSILVRRIERLELAVQ</sequence>
<name>CP144_MYCTO</name>
<organism>
    <name type="scientific">Mycobacterium tuberculosis (strain CDC 1551 / Oshkosh)</name>
    <dbReference type="NCBI Taxonomy" id="83331"/>
    <lineage>
        <taxon>Bacteria</taxon>
        <taxon>Bacillati</taxon>
        <taxon>Actinomycetota</taxon>
        <taxon>Actinomycetes</taxon>
        <taxon>Mycobacteriales</taxon>
        <taxon>Mycobacteriaceae</taxon>
        <taxon>Mycobacterium</taxon>
        <taxon>Mycobacterium tuberculosis complex</taxon>
    </lineage>
</organism>
<accession>P9WPL0</accession>
<accession>L0TAD0</accession>
<accession>O33180</accession>
<protein>
    <recommendedName>
        <fullName>Cytochrome P450 144</fullName>
        <ecNumber>1.14.-.-</ecNumber>
    </recommendedName>
</protein>
<proteinExistence type="inferred from homology"/>